<comment type="function">
    <text evidence="1">F(1)F(0) ATP synthase produces ATP from ADP in the presence of a proton or sodium gradient. F-type ATPases consist of two structural domains, F(1) containing the extramembraneous catalytic core and F(0) containing the membrane proton channel, linked together by a central stalk and a peripheral stalk. During catalysis, ATP synthesis in the catalytic domain of F(1) is coupled via a rotary mechanism of the central stalk subunits to proton translocation.</text>
</comment>
<comment type="function">
    <text evidence="1">Key component of the F(0) channel; it plays a direct role in translocation across the membrane. A homomeric c-ring of between 10-14 subunits forms the central stalk rotor element with the F(1) delta and epsilon subunits.</text>
</comment>
<comment type="subunit">
    <text evidence="1">F-type ATPases have 2 components, F(1) - the catalytic core - and F(0) - the membrane proton channel. F(1) has five subunits: alpha(3), beta(3), gamma(1), delta(1), epsilon(1). F(0) has four main subunits: a(1), b(1), b'(1) and c(10-14). The alpha and beta chains form an alternating ring which encloses part of the gamma chain. F(1) is attached to F(0) by a central stalk formed by the gamma and epsilon chains, while a peripheral stalk is formed by the delta, b and b' chains.</text>
</comment>
<comment type="subcellular location">
    <subcellularLocation>
        <location evidence="1">Plastid</location>
        <location evidence="1">Chloroplast thylakoid membrane</location>
        <topology evidence="1">Multi-pass membrane protein</topology>
    </subcellularLocation>
</comment>
<comment type="miscellaneous">
    <text>In plastids the F-type ATPase is also known as CF(1)CF(0).</text>
</comment>
<comment type="miscellaneous">
    <text>Dicyclohexylcarbodiimide (DCDD) inhibits ATPase.</text>
</comment>
<comment type="similarity">
    <text evidence="1">Belongs to the ATPase C chain family.</text>
</comment>
<proteinExistence type="inferred from homology"/>
<keyword id="KW-0066">ATP synthesis</keyword>
<keyword id="KW-0138">CF(0)</keyword>
<keyword id="KW-0150">Chloroplast</keyword>
<keyword id="KW-0375">Hydrogen ion transport</keyword>
<keyword id="KW-0406">Ion transport</keyword>
<keyword id="KW-0446">Lipid-binding</keyword>
<keyword id="KW-0472">Membrane</keyword>
<keyword id="KW-0934">Plastid</keyword>
<keyword id="KW-0793">Thylakoid</keyword>
<keyword id="KW-0812">Transmembrane</keyword>
<keyword id="KW-1133">Transmembrane helix</keyword>
<keyword id="KW-0813">Transport</keyword>
<protein>
    <recommendedName>
        <fullName evidence="1">ATP synthase subunit c, chloroplastic</fullName>
    </recommendedName>
    <alternativeName>
        <fullName evidence="1">ATP synthase F(0) sector subunit c</fullName>
    </alternativeName>
    <alternativeName>
        <fullName evidence="1">ATPase subunit III</fullName>
    </alternativeName>
    <alternativeName>
        <fullName evidence="1">F-type ATPase subunit c</fullName>
        <shortName evidence="1">F-ATPase subunit c</shortName>
    </alternativeName>
    <alternativeName>
        <fullName evidence="1">Lipid-binding protein</fullName>
    </alternativeName>
</protein>
<geneLocation type="chloroplast"/>
<evidence type="ECO:0000255" key="1">
    <source>
        <dbReference type="HAMAP-Rule" id="MF_01396"/>
    </source>
</evidence>
<sequence length="82" mass="8061">MNPIVAAASVIAAGLAVGLAAIGPGMGQGTAAGYAVEGIARQPEAEGKIRGALLLSFAFMESLTIYGLVVALALLFANPFAG</sequence>
<feature type="chain" id="PRO_0000112185" description="ATP synthase subunit c, chloroplastic">
    <location>
        <begin position="1"/>
        <end position="82"/>
    </location>
</feature>
<feature type="transmembrane region" description="Helical" evidence="1">
    <location>
        <begin position="3"/>
        <end position="23"/>
    </location>
</feature>
<feature type="transmembrane region" description="Helical" evidence="1">
    <location>
        <begin position="57"/>
        <end position="77"/>
    </location>
</feature>
<feature type="site" description="Reversibly protonated during proton transport" evidence="1">
    <location>
        <position position="61"/>
    </location>
</feature>
<accession>P56297</accession>
<dbReference type="EMBL" id="AB001684">
    <property type="protein sequence ID" value="BAA57858.1"/>
    <property type="molecule type" value="Genomic_DNA"/>
</dbReference>
<dbReference type="PIR" id="T07211">
    <property type="entry name" value="T07211"/>
</dbReference>
<dbReference type="RefSeq" id="NP_045783.1">
    <property type="nucleotide sequence ID" value="NC_001865.1"/>
</dbReference>
<dbReference type="SMR" id="P56297"/>
<dbReference type="GeneID" id="809137"/>
<dbReference type="OrthoDB" id="438052at2759"/>
<dbReference type="GO" id="GO:0009535">
    <property type="term" value="C:chloroplast thylakoid membrane"/>
    <property type="evidence" value="ECO:0007669"/>
    <property type="project" value="UniProtKB-SubCell"/>
</dbReference>
<dbReference type="GO" id="GO:0045259">
    <property type="term" value="C:proton-transporting ATP synthase complex"/>
    <property type="evidence" value="ECO:0007669"/>
    <property type="project" value="UniProtKB-KW"/>
</dbReference>
<dbReference type="GO" id="GO:0033177">
    <property type="term" value="C:proton-transporting two-sector ATPase complex, proton-transporting domain"/>
    <property type="evidence" value="ECO:0007669"/>
    <property type="project" value="InterPro"/>
</dbReference>
<dbReference type="GO" id="GO:0008289">
    <property type="term" value="F:lipid binding"/>
    <property type="evidence" value="ECO:0007669"/>
    <property type="project" value="UniProtKB-KW"/>
</dbReference>
<dbReference type="GO" id="GO:0046933">
    <property type="term" value="F:proton-transporting ATP synthase activity, rotational mechanism"/>
    <property type="evidence" value="ECO:0007669"/>
    <property type="project" value="UniProtKB-UniRule"/>
</dbReference>
<dbReference type="CDD" id="cd18183">
    <property type="entry name" value="ATP-synt_Fo_c_ATPH"/>
    <property type="match status" value="1"/>
</dbReference>
<dbReference type="FunFam" id="1.20.20.10:FF:000001">
    <property type="entry name" value="ATP synthase subunit c, chloroplastic"/>
    <property type="match status" value="1"/>
</dbReference>
<dbReference type="Gene3D" id="1.20.20.10">
    <property type="entry name" value="F1F0 ATP synthase subunit C"/>
    <property type="match status" value="1"/>
</dbReference>
<dbReference type="HAMAP" id="MF_01396">
    <property type="entry name" value="ATP_synth_c_bact"/>
    <property type="match status" value="1"/>
</dbReference>
<dbReference type="InterPro" id="IPR005953">
    <property type="entry name" value="ATP_synth_csu_bac/chlpt"/>
</dbReference>
<dbReference type="InterPro" id="IPR000454">
    <property type="entry name" value="ATP_synth_F0_csu"/>
</dbReference>
<dbReference type="InterPro" id="IPR020537">
    <property type="entry name" value="ATP_synth_F0_csu_DDCD_BS"/>
</dbReference>
<dbReference type="InterPro" id="IPR038662">
    <property type="entry name" value="ATP_synth_F0_csu_sf"/>
</dbReference>
<dbReference type="InterPro" id="IPR002379">
    <property type="entry name" value="ATPase_proteolipid_c-like_dom"/>
</dbReference>
<dbReference type="InterPro" id="IPR035921">
    <property type="entry name" value="F/V-ATP_Csub_sf"/>
</dbReference>
<dbReference type="NCBIfam" id="TIGR01260">
    <property type="entry name" value="ATP_synt_c"/>
    <property type="match status" value="1"/>
</dbReference>
<dbReference type="NCBIfam" id="NF005608">
    <property type="entry name" value="PRK07354.1"/>
    <property type="match status" value="1"/>
</dbReference>
<dbReference type="PANTHER" id="PTHR10031">
    <property type="entry name" value="ATP SYNTHASE LIPID-BINDING PROTEIN, MITOCHONDRIAL"/>
    <property type="match status" value="1"/>
</dbReference>
<dbReference type="PANTHER" id="PTHR10031:SF0">
    <property type="entry name" value="ATPASE PROTEIN 9"/>
    <property type="match status" value="1"/>
</dbReference>
<dbReference type="Pfam" id="PF00137">
    <property type="entry name" value="ATP-synt_C"/>
    <property type="match status" value="1"/>
</dbReference>
<dbReference type="PRINTS" id="PR00124">
    <property type="entry name" value="ATPASEC"/>
</dbReference>
<dbReference type="SUPFAM" id="SSF81333">
    <property type="entry name" value="F1F0 ATP synthase subunit C"/>
    <property type="match status" value="1"/>
</dbReference>
<dbReference type="PROSITE" id="PS00605">
    <property type="entry name" value="ATPASE_C"/>
    <property type="match status" value="1"/>
</dbReference>
<gene>
    <name evidence="1" type="primary">atpH</name>
</gene>
<reference key="1">
    <citation type="journal article" date="1997" name="Proc. Natl. Acad. Sci. U.S.A.">
        <title>Complete nucleotide sequence of the chloroplast genome from the green alga Chlorella vulgaris: the existence of genes possibly involved in chloroplast division.</title>
        <authorList>
            <person name="Wakasugi T."/>
            <person name="Nagai T."/>
            <person name="Kapoor M."/>
            <person name="Sugita M."/>
            <person name="Ito M."/>
            <person name="Ito S."/>
            <person name="Tsudzuki J."/>
            <person name="Nakashima K."/>
            <person name="Tsudzuki T."/>
            <person name="Suzuki Y."/>
            <person name="Hamada A."/>
            <person name="Ohta T."/>
            <person name="Inamura A."/>
            <person name="Yoshinaga K."/>
            <person name="Sugiura M."/>
        </authorList>
    </citation>
    <scope>NUCLEOTIDE SEQUENCE [LARGE SCALE GENOMIC DNA]</scope>
    <source>
        <strain>IAM C-27 / Tamiya</strain>
    </source>
</reference>
<organism>
    <name type="scientific">Chlorella vulgaris</name>
    <name type="common">Green alga</name>
    <dbReference type="NCBI Taxonomy" id="3077"/>
    <lineage>
        <taxon>Eukaryota</taxon>
        <taxon>Viridiplantae</taxon>
        <taxon>Chlorophyta</taxon>
        <taxon>core chlorophytes</taxon>
        <taxon>Trebouxiophyceae</taxon>
        <taxon>Chlorellales</taxon>
        <taxon>Chlorellaceae</taxon>
        <taxon>Chlorella clade</taxon>
        <taxon>Chlorella</taxon>
    </lineage>
</organism>
<name>ATPH_CHLVU</name>